<dbReference type="EMBL" id="CP000678">
    <property type="protein sequence ID" value="ABQ86406.1"/>
    <property type="molecule type" value="Genomic_DNA"/>
</dbReference>
<dbReference type="RefSeq" id="WP_004034233.1">
    <property type="nucleotide sequence ID" value="NZ_CP117965.1"/>
</dbReference>
<dbReference type="SMR" id="A5UJM8"/>
<dbReference type="STRING" id="420247.Msm_0201"/>
<dbReference type="EnsemblBacteria" id="ABQ86406">
    <property type="protein sequence ID" value="ABQ86406"/>
    <property type="gene ID" value="Msm_0201"/>
</dbReference>
<dbReference type="KEGG" id="msi:Msm_0201"/>
<dbReference type="PATRIC" id="fig|420247.28.peg.205"/>
<dbReference type="eggNOG" id="arCOG01946">
    <property type="taxonomic scope" value="Archaea"/>
</dbReference>
<dbReference type="HOGENOM" id="CLU_109671_1_1_2"/>
<dbReference type="Proteomes" id="UP000001992">
    <property type="component" value="Chromosome"/>
</dbReference>
<dbReference type="GO" id="GO:1990904">
    <property type="term" value="C:ribonucleoprotein complex"/>
    <property type="evidence" value="ECO:0007669"/>
    <property type="project" value="UniProtKB-KW"/>
</dbReference>
<dbReference type="GO" id="GO:0005840">
    <property type="term" value="C:ribosome"/>
    <property type="evidence" value="ECO:0007669"/>
    <property type="project" value="UniProtKB-KW"/>
</dbReference>
<dbReference type="GO" id="GO:0003735">
    <property type="term" value="F:structural constituent of ribosome"/>
    <property type="evidence" value="ECO:0007669"/>
    <property type="project" value="InterPro"/>
</dbReference>
<dbReference type="GO" id="GO:0006412">
    <property type="term" value="P:translation"/>
    <property type="evidence" value="ECO:0007669"/>
    <property type="project" value="UniProtKB-UniRule"/>
</dbReference>
<dbReference type="HAMAP" id="MF_00512">
    <property type="entry name" value="Ribosomal_eS6"/>
    <property type="match status" value="1"/>
</dbReference>
<dbReference type="InterPro" id="IPR001377">
    <property type="entry name" value="Ribosomal_eS6"/>
</dbReference>
<dbReference type="InterPro" id="IPR020924">
    <property type="entry name" value="Ribosomal_eS6_arc"/>
</dbReference>
<dbReference type="NCBIfam" id="NF003294">
    <property type="entry name" value="PRK04290.1-3"/>
    <property type="match status" value="1"/>
</dbReference>
<dbReference type="PANTHER" id="PTHR11502">
    <property type="entry name" value="40S RIBOSOMAL PROTEIN S6"/>
    <property type="match status" value="1"/>
</dbReference>
<dbReference type="Pfam" id="PF01092">
    <property type="entry name" value="Ribosomal_S6e"/>
    <property type="match status" value="1"/>
</dbReference>
<dbReference type="SMART" id="SM01405">
    <property type="entry name" value="Ribosomal_S6e"/>
    <property type="match status" value="1"/>
</dbReference>
<reference key="1">
    <citation type="journal article" date="2007" name="Proc. Natl. Acad. Sci. U.S.A.">
        <title>Genomic and metabolic adaptations of Methanobrevibacter smithii to the human gut.</title>
        <authorList>
            <person name="Samuel B.S."/>
            <person name="Hansen E.E."/>
            <person name="Manchester J.K."/>
            <person name="Coutinho P.M."/>
            <person name="Henrissat B."/>
            <person name="Fulton R."/>
            <person name="Latreille P."/>
            <person name="Kim K."/>
            <person name="Wilson R.K."/>
            <person name="Gordon J.I."/>
        </authorList>
    </citation>
    <scope>NUCLEOTIDE SEQUENCE [LARGE SCALE GENOMIC DNA]</scope>
    <source>
        <strain>ATCC 35061 / DSM 861 / OCM 144 / PS</strain>
    </source>
</reference>
<proteinExistence type="inferred from homology"/>
<gene>
    <name evidence="1" type="primary">rps6e</name>
    <name type="ordered locus">Msm_0201</name>
</gene>
<evidence type="ECO:0000255" key="1">
    <source>
        <dbReference type="HAMAP-Rule" id="MF_00512"/>
    </source>
</evidence>
<evidence type="ECO:0000305" key="2"/>
<name>RS6E_METS3</name>
<protein>
    <recommendedName>
        <fullName evidence="1">Small ribosomal subunit protein eS6</fullName>
    </recommendedName>
    <alternativeName>
        <fullName evidence="2">30S ribosomal protein S6e</fullName>
    </alternativeName>
</protein>
<comment type="similarity">
    <text evidence="1">Belongs to the eukaryotic ribosomal protein eS6 family.</text>
</comment>
<keyword id="KW-0687">Ribonucleoprotein</keyword>
<keyword id="KW-0689">Ribosomal protein</keyword>
<accession>A5UJM8</accession>
<sequence>MAFKVVVSQKEVTHQIEVEDGKALNGLVIGDEFDGGIVGLDGYTLKVTGGADKNGFTMKKDVPGTRRIKSLLSGGIGYHPKSDGVKRRKTVRGNTIADDIVQVNTVVVSAGSKAIADILGVGDEEEEE</sequence>
<organism>
    <name type="scientific">Methanobrevibacter smithii (strain ATCC 35061 / DSM 861 / OCM 144 / PS)</name>
    <dbReference type="NCBI Taxonomy" id="420247"/>
    <lineage>
        <taxon>Archaea</taxon>
        <taxon>Methanobacteriati</taxon>
        <taxon>Methanobacteriota</taxon>
        <taxon>Methanomada group</taxon>
        <taxon>Methanobacteria</taxon>
        <taxon>Methanobacteriales</taxon>
        <taxon>Methanobacteriaceae</taxon>
        <taxon>Methanobrevibacter</taxon>
    </lineage>
</organism>
<feature type="chain" id="PRO_1000050639" description="Small ribosomal subunit protein eS6">
    <location>
        <begin position="1"/>
        <end position="128"/>
    </location>
</feature>